<accession>P9WHH6</accession>
<accession>L0TC51</accession>
<accession>O53355</accession>
<accession>Q8VJ36</accession>
<name>LPDA_MYCTO</name>
<feature type="chain" id="PRO_0000428185" description="NAD(P)H dehydrogenase (quinone)">
    <location>
        <begin position="1"/>
        <end position="493"/>
    </location>
</feature>
<feature type="binding site">
    <location>
        <begin position="12"/>
        <end position="13"/>
    </location>
    <ligand>
        <name>FAD</name>
        <dbReference type="ChEBI" id="CHEBI:57692"/>
    </ligand>
</feature>
<feature type="binding site">
    <location>
        <begin position="35"/>
        <end position="37"/>
    </location>
    <ligand>
        <name>FAD</name>
        <dbReference type="ChEBI" id="CHEBI:57692"/>
    </ligand>
</feature>
<feature type="binding site">
    <location>
        <begin position="42"/>
        <end position="43"/>
    </location>
    <ligand>
        <name>FAD</name>
        <dbReference type="ChEBI" id="CHEBI:57692"/>
    </ligand>
</feature>
<feature type="binding site">
    <location>
        <position position="52"/>
    </location>
    <ligand>
        <name>FAD</name>
        <dbReference type="ChEBI" id="CHEBI:57692"/>
    </ligand>
</feature>
<feature type="binding site">
    <location>
        <position position="117"/>
    </location>
    <ligand>
        <name>FAD</name>
        <dbReference type="ChEBI" id="CHEBI:57692"/>
    </ligand>
</feature>
<feature type="binding site">
    <location>
        <position position="317"/>
    </location>
    <ligand>
        <name>FAD</name>
        <dbReference type="ChEBI" id="CHEBI:57692"/>
    </ligand>
</feature>
<feature type="binding site">
    <location>
        <begin position="324"/>
        <end position="325"/>
    </location>
    <ligand>
        <name>FAD</name>
        <dbReference type="ChEBI" id="CHEBI:57692"/>
    </ligand>
</feature>
<feature type="binding site">
    <location>
        <position position="450"/>
    </location>
    <ligand>
        <name>FAD</name>
        <dbReference type="ChEBI" id="CHEBI:57692"/>
    </ligand>
</feature>
<comment type="function">
    <text evidence="1">May contribute to virulence by increasing resistance to reactive oxygen intermediates. It can reduce 2,6-dimethyl-1,4-benzoquinone (DMBQ), 5-hydroxy-1,4-naphthaquinone (5-HNQ) and menadione (By similarity).</text>
</comment>
<comment type="catalytic activity">
    <reaction>
        <text>a quinone + NADH + H(+) = a quinol + NAD(+)</text>
        <dbReference type="Rhea" id="RHEA:46160"/>
        <dbReference type="ChEBI" id="CHEBI:15378"/>
        <dbReference type="ChEBI" id="CHEBI:24646"/>
        <dbReference type="ChEBI" id="CHEBI:57540"/>
        <dbReference type="ChEBI" id="CHEBI:57945"/>
        <dbReference type="ChEBI" id="CHEBI:132124"/>
        <dbReference type="EC" id="1.6.5.2"/>
    </reaction>
</comment>
<comment type="catalytic activity">
    <reaction>
        <text>a quinone + NADPH + H(+) = a quinol + NADP(+)</text>
        <dbReference type="Rhea" id="RHEA:46164"/>
        <dbReference type="ChEBI" id="CHEBI:15378"/>
        <dbReference type="ChEBI" id="CHEBI:24646"/>
        <dbReference type="ChEBI" id="CHEBI:57783"/>
        <dbReference type="ChEBI" id="CHEBI:58349"/>
        <dbReference type="ChEBI" id="CHEBI:132124"/>
        <dbReference type="EC" id="1.6.5.2"/>
    </reaction>
</comment>
<comment type="cofactor">
    <cofactor>
        <name>FAD</name>
        <dbReference type="ChEBI" id="CHEBI:57692"/>
    </cofactor>
    <text>Binds 1 FAD per subunit.</text>
</comment>
<comment type="subunit">
    <text evidence="1">Homotetramer.</text>
</comment>
<comment type="similarity">
    <text evidence="2">Belongs to the class-I pyridine nucleotide-disulfide oxidoreductase family.</text>
</comment>
<protein>
    <recommendedName>
        <fullName>NAD(P)H dehydrogenase (quinone)</fullName>
        <ecNumber>1.6.5.2</ecNumber>
    </recommendedName>
    <alternativeName>
        <fullName>NAD(P)H quinone reductase</fullName>
    </alternativeName>
    <alternativeName>
        <fullName>NAD(P)H: menadione oxidoreductase</fullName>
    </alternativeName>
    <alternativeName>
        <fullName>NADH-menadione reductase</fullName>
    </alternativeName>
</protein>
<dbReference type="EC" id="1.6.5.2"/>
<dbReference type="EMBL" id="AE000516">
    <property type="protein sequence ID" value="AAK47745.1"/>
    <property type="molecule type" value="Genomic_DNA"/>
</dbReference>
<dbReference type="PIR" id="F70841">
    <property type="entry name" value="F70841"/>
</dbReference>
<dbReference type="SMR" id="P9WHH6"/>
<dbReference type="KEGG" id="mtc:MT3402"/>
<dbReference type="HOGENOM" id="CLU_016755_0_3_11"/>
<dbReference type="Proteomes" id="UP000001020">
    <property type="component" value="Chromosome"/>
</dbReference>
<dbReference type="GO" id="GO:0050660">
    <property type="term" value="F:flavin adenine dinucleotide binding"/>
    <property type="evidence" value="ECO:0007669"/>
    <property type="project" value="TreeGrafter"/>
</dbReference>
<dbReference type="GO" id="GO:0050136">
    <property type="term" value="F:NADH:ubiquinone reductase (non-electrogenic) activity"/>
    <property type="evidence" value="ECO:0007669"/>
    <property type="project" value="RHEA"/>
</dbReference>
<dbReference type="GO" id="GO:0008753">
    <property type="term" value="F:NADPH dehydrogenase (quinone) activity"/>
    <property type="evidence" value="ECO:0007669"/>
    <property type="project" value="RHEA"/>
</dbReference>
<dbReference type="FunFam" id="3.50.50.60:FF:000054">
    <property type="entry name" value="Flavoprotein disulfide reductase"/>
    <property type="match status" value="1"/>
</dbReference>
<dbReference type="Gene3D" id="3.30.390.30">
    <property type="match status" value="1"/>
</dbReference>
<dbReference type="Gene3D" id="3.50.50.60">
    <property type="entry name" value="FAD/NAD(P)-binding domain"/>
    <property type="match status" value="2"/>
</dbReference>
<dbReference type="InterPro" id="IPR036188">
    <property type="entry name" value="FAD/NAD-bd_sf"/>
</dbReference>
<dbReference type="InterPro" id="IPR023753">
    <property type="entry name" value="FAD/NAD-binding_dom"/>
</dbReference>
<dbReference type="InterPro" id="IPR016156">
    <property type="entry name" value="FAD/NAD-linked_Rdtase_dimer_sf"/>
</dbReference>
<dbReference type="InterPro" id="IPR001100">
    <property type="entry name" value="Pyr_nuc-diS_OxRdtase"/>
</dbReference>
<dbReference type="InterPro" id="IPR004099">
    <property type="entry name" value="Pyr_nucl-diS_OxRdtase_dimer"/>
</dbReference>
<dbReference type="NCBIfam" id="NF005883">
    <property type="entry name" value="PRK07845.1"/>
    <property type="match status" value="1"/>
</dbReference>
<dbReference type="PANTHER" id="PTHR43014">
    <property type="entry name" value="MERCURIC REDUCTASE"/>
    <property type="match status" value="1"/>
</dbReference>
<dbReference type="PANTHER" id="PTHR43014:SF1">
    <property type="entry name" value="NAD(P)H DEHYDROGENASE (QUINONE)"/>
    <property type="match status" value="1"/>
</dbReference>
<dbReference type="Pfam" id="PF07992">
    <property type="entry name" value="Pyr_redox_2"/>
    <property type="match status" value="1"/>
</dbReference>
<dbReference type="Pfam" id="PF02852">
    <property type="entry name" value="Pyr_redox_dim"/>
    <property type="match status" value="1"/>
</dbReference>
<dbReference type="PIRSF" id="PIRSF000350">
    <property type="entry name" value="Mercury_reductase_MerA"/>
    <property type="match status" value="1"/>
</dbReference>
<dbReference type="PRINTS" id="PR00368">
    <property type="entry name" value="FADPNR"/>
</dbReference>
<dbReference type="PRINTS" id="PR00411">
    <property type="entry name" value="PNDRDTASEI"/>
</dbReference>
<dbReference type="SUPFAM" id="SSF51905">
    <property type="entry name" value="FAD/NAD(P)-binding domain"/>
    <property type="match status" value="1"/>
</dbReference>
<dbReference type="SUPFAM" id="SSF55424">
    <property type="entry name" value="FAD/NAD-linked reductases, dimerisation (C-terminal) domain"/>
    <property type="match status" value="1"/>
</dbReference>
<evidence type="ECO:0000250" key="1"/>
<evidence type="ECO:0000305" key="2"/>
<proteinExistence type="inferred from homology"/>
<keyword id="KW-0274">FAD</keyword>
<keyword id="KW-0285">Flavoprotein</keyword>
<keyword id="KW-0520">NAD</keyword>
<keyword id="KW-0560">Oxidoreductase</keyword>
<keyword id="KW-1185">Reference proteome</keyword>
<gene>
    <name type="primary">lpdA</name>
    <name type="synonym">lpdA-2</name>
    <name type="ordered locus">MT3402</name>
</gene>
<organism>
    <name type="scientific">Mycobacterium tuberculosis (strain CDC 1551 / Oshkosh)</name>
    <dbReference type="NCBI Taxonomy" id="83331"/>
    <lineage>
        <taxon>Bacteria</taxon>
        <taxon>Bacillati</taxon>
        <taxon>Actinomycetota</taxon>
        <taxon>Actinomycetes</taxon>
        <taxon>Mycobacteriales</taxon>
        <taxon>Mycobacteriaceae</taxon>
        <taxon>Mycobacterium</taxon>
        <taxon>Mycobacterium tuberculosis complex</taxon>
    </lineage>
</organism>
<sequence length="493" mass="51489">MVTRIVILGGGPAGYEAALVAATSHPETTQVTVIDCDGIGGAAVLDDCVPSKTFIASTGLRTELRRAPHLGFHIDFDDAKISLPQIHARVKTLAAAQSADITAQLLSMGVQVIAGRGELIDSTPGLARHRIKATAADGSTSEHEADVVLVATGASPRILPSAQPDGERILTWRQLYDLDALPDHLIVVGSGVTGAEFVDAYTELGVPVTVVASQDHVLPYEDADAALVLEESFAERGVRLFKNARAASVTRTGAGVLVTMTDGRTVEGSHALMTIGSVPNTSGLGLERVGIQLGRGNYLTVDRVSRTLATGIYAAGDCTGLLPLASVAAMQGRIAMYHALGEGVSPIRLRTVAATVFTRPEIAAVGVPQSVIDAGSVAARTIMLPLRTNARAKMSEMRHGFVKIFCRRSTGVVIGGVVVAPIASELILPIAVAVQNRITVNELAQTLAVYPSLSGSITEAARRLMAHDDLDCTAAQDAAEQLALVPHHLPTSN</sequence>
<reference key="1">
    <citation type="journal article" date="2002" name="J. Bacteriol.">
        <title>Whole-genome comparison of Mycobacterium tuberculosis clinical and laboratory strains.</title>
        <authorList>
            <person name="Fleischmann R.D."/>
            <person name="Alland D."/>
            <person name="Eisen J.A."/>
            <person name="Carpenter L."/>
            <person name="White O."/>
            <person name="Peterson J.D."/>
            <person name="DeBoy R.T."/>
            <person name="Dodson R.J."/>
            <person name="Gwinn M.L."/>
            <person name="Haft D.H."/>
            <person name="Hickey E.K."/>
            <person name="Kolonay J.F."/>
            <person name="Nelson W.C."/>
            <person name="Umayam L.A."/>
            <person name="Ermolaeva M.D."/>
            <person name="Salzberg S.L."/>
            <person name="Delcher A."/>
            <person name="Utterback T.R."/>
            <person name="Weidman J.F."/>
            <person name="Khouri H.M."/>
            <person name="Gill J."/>
            <person name="Mikula A."/>
            <person name="Bishai W."/>
            <person name="Jacobs W.R. Jr."/>
            <person name="Venter J.C."/>
            <person name="Fraser C.M."/>
        </authorList>
    </citation>
    <scope>NUCLEOTIDE SEQUENCE [LARGE SCALE GENOMIC DNA]</scope>
    <source>
        <strain>CDC 1551 / Oshkosh</strain>
    </source>
</reference>